<feature type="chain" id="PRO_1000145033" description="Protein translocase subunit SecA">
    <location>
        <begin position="1"/>
        <end position="958"/>
    </location>
</feature>
<feature type="region of interest" description="Disordered" evidence="2">
    <location>
        <begin position="598"/>
        <end position="617"/>
    </location>
</feature>
<feature type="binding site" evidence="1">
    <location>
        <position position="87"/>
    </location>
    <ligand>
        <name>ATP</name>
        <dbReference type="ChEBI" id="CHEBI:30616"/>
    </ligand>
</feature>
<feature type="binding site" evidence="1">
    <location>
        <begin position="105"/>
        <end position="109"/>
    </location>
    <ligand>
        <name>ATP</name>
        <dbReference type="ChEBI" id="CHEBI:30616"/>
    </ligand>
</feature>
<feature type="binding site" evidence="1">
    <location>
        <position position="524"/>
    </location>
    <ligand>
        <name>ATP</name>
        <dbReference type="ChEBI" id="CHEBI:30616"/>
    </ligand>
</feature>
<feature type="binding site" evidence="1">
    <location>
        <position position="939"/>
    </location>
    <ligand>
        <name>Zn(2+)</name>
        <dbReference type="ChEBI" id="CHEBI:29105"/>
    </ligand>
</feature>
<feature type="binding site" evidence="1">
    <location>
        <position position="941"/>
    </location>
    <ligand>
        <name>Zn(2+)</name>
        <dbReference type="ChEBI" id="CHEBI:29105"/>
    </ligand>
</feature>
<feature type="binding site" evidence="1">
    <location>
        <position position="950"/>
    </location>
    <ligand>
        <name>Zn(2+)</name>
        <dbReference type="ChEBI" id="CHEBI:29105"/>
    </ligand>
</feature>
<feature type="binding site" evidence="1">
    <location>
        <position position="951"/>
    </location>
    <ligand>
        <name>Zn(2+)</name>
        <dbReference type="ChEBI" id="CHEBI:29105"/>
    </ligand>
</feature>
<protein>
    <recommendedName>
        <fullName evidence="1">Protein translocase subunit SecA</fullName>
        <ecNumber evidence="1">7.4.2.8</ecNumber>
    </recommendedName>
</protein>
<sequence>MLGAIAKKIFGSSNDRRVKGYRPRVAAINALEPEMEALSDEALRARTDALKAEVAAGKSLDDILVPAFATVREAAKRVLGQRHFDVQLIGGMVLHEGGIAEMKTGEGKTLVATLATYLNALAGQGVHVVTVNDYLARRDAEWMGRVYGFLGLSTGIIVHGLDDAERKAAYACDITYGTNNEYGFDYLRDNMKYELGQMVQRGHAFAIVDEVDSILIDEARTPLIISGPIDDRSDLYVAIDALMPRLAREDYDLDEKQRTVSLTESGNEHIEELLREAGVLREGDLYDAHNITIVHHVNQALRAHTLFTRDKDYIVRNDEVVIIDEFTGRMMPGRRYSEGLHQALEAKERVTIQPENQTLASITFQNYFRLYKKLAGMTGTASTEADEFQEIYNLGVVEIPTNRPVERVDEDDEVYRTAEEKYAAIIAEIDKAHARHQPVLVGTGSIERSEHIAALLERHGYRPLDYSNLSAMEEVYAAAREGRVTKRFAVLNARFHEQEAYIVAQAGVPGAITIATNMAGRGTDIKLGGNVEMRVAQELAEVPEGPERQARVDAIRREIDENRAQVLASGEPADPEAGRKSALPGGLYIVGTERNESRRIDNQLRGRSGRQGDPGRSKFYLSLQDDLMRIFGSDRMDGMLQKLGLEQGEAIIHPWINKAIAKAQQKVEARNFDMRKNVLKYDNVMNDQRKVVFEQRREFMAQESVRETVDEMRHGVVDDVVAQHIPEDAYPEQWDVAGLREAIGAQLNLDVPVEDWAKEEGIADEEIRDRLRKAADEGYAARVERNGPDLMAYVEKQVLLQSLDHLWREHLVTLDHLRQVIGWRGIAQRDPLNEYKSEAFELFNGLIGSLREQVTGQLMRIEIMMQEPEAPSLPPMFAQHLDPVTGENEFALPQGSGSFGGGGGAFGYAAQDLSADAAVLERDPTDASTWGRVGRNEPCPCGSGKKYKHCHGRFSGEA</sequence>
<accession>B0U8E7</accession>
<organism>
    <name type="scientific">Methylobacterium sp. (strain 4-46)</name>
    <dbReference type="NCBI Taxonomy" id="426117"/>
    <lineage>
        <taxon>Bacteria</taxon>
        <taxon>Pseudomonadati</taxon>
        <taxon>Pseudomonadota</taxon>
        <taxon>Alphaproteobacteria</taxon>
        <taxon>Hyphomicrobiales</taxon>
        <taxon>Methylobacteriaceae</taxon>
        <taxon>Methylobacterium</taxon>
    </lineage>
</organism>
<reference key="1">
    <citation type="submission" date="2008-02" db="EMBL/GenBank/DDBJ databases">
        <title>Complete sequence of chromosome of Methylobacterium sp. 4-46.</title>
        <authorList>
            <consortium name="US DOE Joint Genome Institute"/>
            <person name="Copeland A."/>
            <person name="Lucas S."/>
            <person name="Lapidus A."/>
            <person name="Glavina del Rio T."/>
            <person name="Dalin E."/>
            <person name="Tice H."/>
            <person name="Bruce D."/>
            <person name="Goodwin L."/>
            <person name="Pitluck S."/>
            <person name="Chertkov O."/>
            <person name="Brettin T."/>
            <person name="Detter J.C."/>
            <person name="Han C."/>
            <person name="Kuske C.R."/>
            <person name="Schmutz J."/>
            <person name="Larimer F."/>
            <person name="Land M."/>
            <person name="Hauser L."/>
            <person name="Kyrpides N."/>
            <person name="Ivanova N."/>
            <person name="Marx C.J."/>
            <person name="Richardson P."/>
        </authorList>
    </citation>
    <scope>NUCLEOTIDE SEQUENCE [LARGE SCALE GENOMIC DNA]</scope>
    <source>
        <strain>4-46</strain>
    </source>
</reference>
<name>SECA_METS4</name>
<keyword id="KW-0067">ATP-binding</keyword>
<keyword id="KW-0997">Cell inner membrane</keyword>
<keyword id="KW-1003">Cell membrane</keyword>
<keyword id="KW-0963">Cytoplasm</keyword>
<keyword id="KW-0472">Membrane</keyword>
<keyword id="KW-0479">Metal-binding</keyword>
<keyword id="KW-0547">Nucleotide-binding</keyword>
<keyword id="KW-0653">Protein transport</keyword>
<keyword id="KW-1278">Translocase</keyword>
<keyword id="KW-0811">Translocation</keyword>
<keyword id="KW-0813">Transport</keyword>
<keyword id="KW-0862">Zinc</keyword>
<gene>
    <name evidence="1" type="primary">secA</name>
    <name type="ordered locus">M446_1791</name>
</gene>
<evidence type="ECO:0000255" key="1">
    <source>
        <dbReference type="HAMAP-Rule" id="MF_01382"/>
    </source>
</evidence>
<evidence type="ECO:0000256" key="2">
    <source>
        <dbReference type="SAM" id="MobiDB-lite"/>
    </source>
</evidence>
<proteinExistence type="inferred from homology"/>
<comment type="function">
    <text evidence="1">Part of the Sec protein translocase complex. Interacts with the SecYEG preprotein conducting channel. Has a central role in coupling the hydrolysis of ATP to the transfer of proteins into and across the cell membrane, serving both as a receptor for the preprotein-SecB complex and as an ATP-driven molecular motor driving the stepwise translocation of polypeptide chains across the membrane.</text>
</comment>
<comment type="catalytic activity">
    <reaction evidence="1">
        <text>ATP + H2O + cellular proteinSide 1 = ADP + phosphate + cellular proteinSide 2.</text>
        <dbReference type="EC" id="7.4.2.8"/>
    </reaction>
</comment>
<comment type="cofactor">
    <cofactor evidence="1">
        <name>Zn(2+)</name>
        <dbReference type="ChEBI" id="CHEBI:29105"/>
    </cofactor>
    <text evidence="1">May bind 1 zinc ion per subunit.</text>
</comment>
<comment type="subunit">
    <text evidence="1">Monomer and homodimer. Part of the essential Sec protein translocation apparatus which comprises SecA, SecYEG and auxiliary proteins SecDF-YajC and YidC.</text>
</comment>
<comment type="subcellular location">
    <subcellularLocation>
        <location evidence="1">Cell inner membrane</location>
        <topology evidence="1">Peripheral membrane protein</topology>
        <orientation evidence="1">Cytoplasmic side</orientation>
    </subcellularLocation>
    <subcellularLocation>
        <location evidence="1">Cytoplasm</location>
    </subcellularLocation>
    <text evidence="1">Distribution is 50-50.</text>
</comment>
<comment type="similarity">
    <text evidence="1">Belongs to the SecA family.</text>
</comment>
<dbReference type="EC" id="7.4.2.8" evidence="1"/>
<dbReference type="EMBL" id="CP000943">
    <property type="protein sequence ID" value="ACA16277.1"/>
    <property type="molecule type" value="Genomic_DNA"/>
</dbReference>
<dbReference type="RefSeq" id="WP_012331687.1">
    <property type="nucleotide sequence ID" value="NC_010511.1"/>
</dbReference>
<dbReference type="SMR" id="B0U8E7"/>
<dbReference type="STRING" id="426117.M446_1791"/>
<dbReference type="KEGG" id="met:M446_1791"/>
<dbReference type="eggNOG" id="COG0653">
    <property type="taxonomic scope" value="Bacteria"/>
</dbReference>
<dbReference type="HOGENOM" id="CLU_005314_3_0_5"/>
<dbReference type="GO" id="GO:0031522">
    <property type="term" value="C:cell envelope Sec protein transport complex"/>
    <property type="evidence" value="ECO:0007669"/>
    <property type="project" value="TreeGrafter"/>
</dbReference>
<dbReference type="GO" id="GO:0005829">
    <property type="term" value="C:cytosol"/>
    <property type="evidence" value="ECO:0007669"/>
    <property type="project" value="TreeGrafter"/>
</dbReference>
<dbReference type="GO" id="GO:0005886">
    <property type="term" value="C:plasma membrane"/>
    <property type="evidence" value="ECO:0007669"/>
    <property type="project" value="UniProtKB-SubCell"/>
</dbReference>
<dbReference type="GO" id="GO:0005524">
    <property type="term" value="F:ATP binding"/>
    <property type="evidence" value="ECO:0007669"/>
    <property type="project" value="UniProtKB-UniRule"/>
</dbReference>
<dbReference type="GO" id="GO:0046872">
    <property type="term" value="F:metal ion binding"/>
    <property type="evidence" value="ECO:0007669"/>
    <property type="project" value="UniProtKB-KW"/>
</dbReference>
<dbReference type="GO" id="GO:0008564">
    <property type="term" value="F:protein-exporting ATPase activity"/>
    <property type="evidence" value="ECO:0007669"/>
    <property type="project" value="UniProtKB-EC"/>
</dbReference>
<dbReference type="GO" id="GO:0065002">
    <property type="term" value="P:intracellular protein transmembrane transport"/>
    <property type="evidence" value="ECO:0007669"/>
    <property type="project" value="UniProtKB-UniRule"/>
</dbReference>
<dbReference type="GO" id="GO:0017038">
    <property type="term" value="P:protein import"/>
    <property type="evidence" value="ECO:0007669"/>
    <property type="project" value="InterPro"/>
</dbReference>
<dbReference type="GO" id="GO:0006605">
    <property type="term" value="P:protein targeting"/>
    <property type="evidence" value="ECO:0007669"/>
    <property type="project" value="UniProtKB-UniRule"/>
</dbReference>
<dbReference type="GO" id="GO:0043952">
    <property type="term" value="P:protein transport by the Sec complex"/>
    <property type="evidence" value="ECO:0007669"/>
    <property type="project" value="TreeGrafter"/>
</dbReference>
<dbReference type="CDD" id="cd17928">
    <property type="entry name" value="DEXDc_SecA"/>
    <property type="match status" value="1"/>
</dbReference>
<dbReference type="CDD" id="cd18803">
    <property type="entry name" value="SF2_C_secA"/>
    <property type="match status" value="1"/>
</dbReference>
<dbReference type="FunFam" id="3.90.1440.10:FF:000001">
    <property type="entry name" value="Preprotein translocase subunit SecA"/>
    <property type="match status" value="1"/>
</dbReference>
<dbReference type="FunFam" id="1.10.3060.10:FF:000003">
    <property type="entry name" value="Protein translocase subunit SecA"/>
    <property type="match status" value="1"/>
</dbReference>
<dbReference type="FunFam" id="3.40.50.300:FF:000334">
    <property type="entry name" value="Protein translocase subunit SecA"/>
    <property type="match status" value="1"/>
</dbReference>
<dbReference type="FunFam" id="3.40.50.300:FF:001790">
    <property type="entry name" value="Protein translocase subunit SecA"/>
    <property type="match status" value="1"/>
</dbReference>
<dbReference type="Gene3D" id="3.10.450.50">
    <property type="match status" value="1"/>
</dbReference>
<dbReference type="Gene3D" id="1.10.3060.10">
    <property type="entry name" value="Helical scaffold and wing domains of SecA"/>
    <property type="match status" value="1"/>
</dbReference>
<dbReference type="Gene3D" id="3.40.50.300">
    <property type="entry name" value="P-loop containing nucleotide triphosphate hydrolases"/>
    <property type="match status" value="2"/>
</dbReference>
<dbReference type="Gene3D" id="3.90.1440.10">
    <property type="entry name" value="SecA, preprotein cross-linking domain"/>
    <property type="match status" value="1"/>
</dbReference>
<dbReference type="HAMAP" id="MF_01382">
    <property type="entry name" value="SecA"/>
    <property type="match status" value="1"/>
</dbReference>
<dbReference type="InterPro" id="IPR014001">
    <property type="entry name" value="Helicase_ATP-bd"/>
</dbReference>
<dbReference type="InterPro" id="IPR027417">
    <property type="entry name" value="P-loop_NTPase"/>
</dbReference>
<dbReference type="InterPro" id="IPR004027">
    <property type="entry name" value="SEC_C_motif"/>
</dbReference>
<dbReference type="InterPro" id="IPR000185">
    <property type="entry name" value="SecA"/>
</dbReference>
<dbReference type="InterPro" id="IPR020937">
    <property type="entry name" value="SecA_CS"/>
</dbReference>
<dbReference type="InterPro" id="IPR011115">
    <property type="entry name" value="SecA_DEAD"/>
</dbReference>
<dbReference type="InterPro" id="IPR014018">
    <property type="entry name" value="SecA_motor_DEAD"/>
</dbReference>
<dbReference type="InterPro" id="IPR011130">
    <property type="entry name" value="SecA_preprotein_X-link_dom"/>
</dbReference>
<dbReference type="InterPro" id="IPR044722">
    <property type="entry name" value="SecA_SF2_C"/>
</dbReference>
<dbReference type="InterPro" id="IPR011116">
    <property type="entry name" value="SecA_Wing/Scaffold"/>
</dbReference>
<dbReference type="InterPro" id="IPR036266">
    <property type="entry name" value="SecA_Wing/Scaffold_sf"/>
</dbReference>
<dbReference type="InterPro" id="IPR036670">
    <property type="entry name" value="SecA_X-link_sf"/>
</dbReference>
<dbReference type="NCBIfam" id="NF009538">
    <property type="entry name" value="PRK12904.1"/>
    <property type="match status" value="1"/>
</dbReference>
<dbReference type="NCBIfam" id="TIGR00963">
    <property type="entry name" value="secA"/>
    <property type="match status" value="1"/>
</dbReference>
<dbReference type="PANTHER" id="PTHR30612:SF0">
    <property type="entry name" value="CHLOROPLAST PROTEIN-TRANSPORTING ATPASE"/>
    <property type="match status" value="1"/>
</dbReference>
<dbReference type="PANTHER" id="PTHR30612">
    <property type="entry name" value="SECA INNER MEMBRANE COMPONENT OF SEC PROTEIN SECRETION SYSTEM"/>
    <property type="match status" value="1"/>
</dbReference>
<dbReference type="Pfam" id="PF21090">
    <property type="entry name" value="P-loop_SecA"/>
    <property type="match status" value="1"/>
</dbReference>
<dbReference type="Pfam" id="PF02810">
    <property type="entry name" value="SEC-C"/>
    <property type="match status" value="1"/>
</dbReference>
<dbReference type="Pfam" id="PF07517">
    <property type="entry name" value="SecA_DEAD"/>
    <property type="match status" value="1"/>
</dbReference>
<dbReference type="Pfam" id="PF01043">
    <property type="entry name" value="SecA_PP_bind"/>
    <property type="match status" value="1"/>
</dbReference>
<dbReference type="Pfam" id="PF07516">
    <property type="entry name" value="SecA_SW"/>
    <property type="match status" value="1"/>
</dbReference>
<dbReference type="PRINTS" id="PR00906">
    <property type="entry name" value="SECA"/>
</dbReference>
<dbReference type="SMART" id="SM00957">
    <property type="entry name" value="SecA_DEAD"/>
    <property type="match status" value="1"/>
</dbReference>
<dbReference type="SMART" id="SM00958">
    <property type="entry name" value="SecA_PP_bind"/>
    <property type="match status" value="1"/>
</dbReference>
<dbReference type="SUPFAM" id="SSF81886">
    <property type="entry name" value="Helical scaffold and wing domains of SecA"/>
    <property type="match status" value="1"/>
</dbReference>
<dbReference type="SUPFAM" id="SSF52540">
    <property type="entry name" value="P-loop containing nucleoside triphosphate hydrolases"/>
    <property type="match status" value="2"/>
</dbReference>
<dbReference type="SUPFAM" id="SSF81767">
    <property type="entry name" value="Pre-protein crosslinking domain of SecA"/>
    <property type="match status" value="1"/>
</dbReference>
<dbReference type="PROSITE" id="PS01312">
    <property type="entry name" value="SECA"/>
    <property type="match status" value="1"/>
</dbReference>
<dbReference type="PROSITE" id="PS51196">
    <property type="entry name" value="SECA_MOTOR_DEAD"/>
    <property type="match status" value="1"/>
</dbReference>